<keyword id="KW-0436">Ligase</keyword>
<keyword id="KW-0596">Phosphopantetheine</keyword>
<keyword id="KW-0597">Phosphoprotein</keyword>
<keyword id="KW-1185">Reference proteome</keyword>
<name>INPB_EMENI</name>
<comment type="function">
    <text evidence="6 11 12">Nonribosomal peptide synthetase; part of the inp gene cluster that mediates the biosynthesis of fellutamide B, a mycotoxin that acts as a proteasome inhibitor (PubMed:18804170, PubMed:20952652, PubMed:27294372). In the first step of fellutabmide B biosynthesis inpC activates 3-hydroxydodecanoic acid to generate 3-hydroxydodecanoyl-AMP that is then loaded onto the T0 domain of inpB (PubMed:27294372). The 3-hydroxydodecanoyl-S-phosphopantetheinyl-T0 is sequentially extended with L-Asn and L-Gln by the two CAT modules of inpB (PubMed:27294372). The linear lipodipeptide from inpB is then transferred onto inpA for the addition of the third amino acid, L-Leu (PubMed:27294372). Reductive releasing of the lipotripeptide by the TE domain of inpA produces (2S)-fellutamide B (PubMed:27294372). InpF might be involved in the release and transfer of the lipodipeptide from inpB to inpA (PubMed:27294372). The inp cluster-encoded proteasome subunit inpE confers resistance to internally produced fellutamides (PubMed:27294372). The MFS efflux transporter inpD may contribute to fellutamide resistance as well (PubMed:27294372).</text>
</comment>
<comment type="pathway">
    <text evidence="6">Secondary metabolite biosynthesis.</text>
</comment>
<comment type="induction">
    <text evidence="5">Expression is positively regulated by the secondary metabolism cross-pathway regulator scpR (PubMed:20952652).</text>
</comment>
<comment type="domain">
    <text evidence="1 11">NRP synthetases are composed of discrete domains (adenylation (A), thiolation (T) or peptidyl carrier protein (PCP) and condensation (C) domains) which when grouped together are referred to as a single module (By similarity). Each module is responsible for the recognition (via the A domain) and incorporation of a single amino acid into the growing peptide product (By similarity). Thus, an NRP synthetase is generally composed of one or more modules and can terminate in a thioesterase domain (TE) that releases the newly synthesized peptide from the enzyme (By similarity). Occasionally, methyltransferase domains (responsible for amino acid methylation) are present within the NRP synthetase (By similarity). InpB has the following architecture: T0-C-A-T-C-A-T (PubMed:18804170).</text>
</comment>
<comment type="disruption phenotype">
    <text evidence="5 6">Eliminates the production of fellutamides (PubMed:27294372). Does not impair the production of asperfuranone (PubMed:20952652).</text>
</comment>
<comment type="similarity">
    <text evidence="10">Belongs to the NRP synthetase family.</text>
</comment>
<gene>
    <name evidence="8" type="primary">inpB</name>
    <name type="ORF">ANIA_03496</name>
</gene>
<accession>Q5B7I4</accession>
<accession>C8V545</accession>
<organism>
    <name type="scientific">Emericella nidulans (strain FGSC A4 / ATCC 38163 / CBS 112.46 / NRRL 194 / M139)</name>
    <name type="common">Aspergillus nidulans</name>
    <dbReference type="NCBI Taxonomy" id="227321"/>
    <lineage>
        <taxon>Eukaryota</taxon>
        <taxon>Fungi</taxon>
        <taxon>Dikarya</taxon>
        <taxon>Ascomycota</taxon>
        <taxon>Pezizomycotina</taxon>
        <taxon>Eurotiomycetes</taxon>
        <taxon>Eurotiomycetidae</taxon>
        <taxon>Eurotiales</taxon>
        <taxon>Aspergillaceae</taxon>
        <taxon>Aspergillus</taxon>
        <taxon>Aspergillus subgen. Nidulantes</taxon>
    </lineage>
</organism>
<feature type="chain" id="PRO_0000444109" description="Nonribosomal peptide synthetase inpB">
    <location>
        <begin position="1"/>
        <end position="2326"/>
    </location>
</feature>
<feature type="domain" description="Carrier 1" evidence="3 11">
    <location>
        <begin position="8"/>
        <end position="84"/>
    </location>
</feature>
<feature type="domain" description="Carrier 2" evidence="3 11">
    <location>
        <begin position="1145"/>
        <end position="1221"/>
    </location>
</feature>
<feature type="domain" description="Carrier 3" evidence="3 11">
    <location>
        <begin position="2216"/>
        <end position="2294"/>
    </location>
</feature>
<feature type="region of interest" description="Disordered" evidence="4">
    <location>
        <begin position="87"/>
        <end position="121"/>
    </location>
</feature>
<feature type="region of interest" description="Condensation 1" evidence="2 11">
    <location>
        <begin position="144"/>
        <end position="568"/>
    </location>
</feature>
<feature type="region of interest" description="Adenylation 1" evidence="2 11">
    <location>
        <begin position="593"/>
        <end position="997"/>
    </location>
</feature>
<feature type="region of interest" description="Disordered" evidence="4">
    <location>
        <begin position="1226"/>
        <end position="1247"/>
    </location>
</feature>
<feature type="region of interest" description="Condensation 2" evidence="2 11">
    <location>
        <begin position="1266"/>
        <end position="1680"/>
    </location>
</feature>
<feature type="region of interest" description="Adenylation 2" evidence="2 11">
    <location>
        <begin position="1702"/>
        <end position="2097"/>
    </location>
</feature>
<feature type="compositionally biased region" description="Polar residues" evidence="4">
    <location>
        <begin position="108"/>
        <end position="121"/>
    </location>
</feature>
<feature type="modified residue" description="O-(pantetheine 4'-phosphoryl)serine" evidence="3">
    <location>
        <position position="45"/>
    </location>
</feature>
<feature type="modified residue" description="O-(pantetheine 4'-phosphoryl)serine" evidence="3">
    <location>
        <position position="1182"/>
    </location>
</feature>
<feature type="modified residue" description="O-(pantetheine 4'-phosphoryl)serine" evidence="3">
    <location>
        <position position="2253"/>
    </location>
</feature>
<dbReference type="EMBL" id="BN001302">
    <property type="protein sequence ID" value="CBF76036.1"/>
    <property type="molecule type" value="Genomic_DNA"/>
</dbReference>
<dbReference type="RefSeq" id="XP_661100.1">
    <property type="nucleotide sequence ID" value="XM_656008.1"/>
</dbReference>
<dbReference type="SMR" id="Q5B7I4"/>
<dbReference type="STRING" id="227321.Q5B7I4"/>
<dbReference type="EnsemblFungi" id="CBF76036">
    <property type="protein sequence ID" value="CBF76036"/>
    <property type="gene ID" value="ANIA_03496"/>
</dbReference>
<dbReference type="GeneID" id="2872918"/>
<dbReference type="KEGG" id="ani:ANIA_03496"/>
<dbReference type="VEuPathDB" id="FungiDB:AN3496"/>
<dbReference type="eggNOG" id="KOG1178">
    <property type="taxonomic scope" value="Eukaryota"/>
</dbReference>
<dbReference type="HOGENOM" id="CLU_000022_60_4_1"/>
<dbReference type="InParanoid" id="Q5B7I4"/>
<dbReference type="OMA" id="CTPISTI"/>
<dbReference type="OrthoDB" id="416786at2759"/>
<dbReference type="Proteomes" id="UP000000560">
    <property type="component" value="Chromosome II"/>
</dbReference>
<dbReference type="GO" id="GO:0005737">
    <property type="term" value="C:cytoplasm"/>
    <property type="evidence" value="ECO:0000318"/>
    <property type="project" value="GO_Central"/>
</dbReference>
<dbReference type="GO" id="GO:0016874">
    <property type="term" value="F:ligase activity"/>
    <property type="evidence" value="ECO:0007669"/>
    <property type="project" value="UniProtKB-KW"/>
</dbReference>
<dbReference type="GO" id="GO:0031177">
    <property type="term" value="F:phosphopantetheine binding"/>
    <property type="evidence" value="ECO:0000318"/>
    <property type="project" value="GO_Central"/>
</dbReference>
<dbReference type="GO" id="GO:0043041">
    <property type="term" value="P:amino acid activation for nonribosomal peptide biosynthetic process"/>
    <property type="evidence" value="ECO:0000318"/>
    <property type="project" value="GO_Central"/>
</dbReference>
<dbReference type="GO" id="GO:0019748">
    <property type="term" value="P:secondary metabolic process"/>
    <property type="evidence" value="ECO:0000270"/>
    <property type="project" value="AspGD"/>
</dbReference>
<dbReference type="GO" id="GO:0044550">
    <property type="term" value="P:secondary metabolite biosynthetic process"/>
    <property type="evidence" value="ECO:0000318"/>
    <property type="project" value="GO_Central"/>
</dbReference>
<dbReference type="CDD" id="cd05918">
    <property type="entry name" value="A_NRPS_SidN3_like"/>
    <property type="match status" value="2"/>
</dbReference>
<dbReference type="CDD" id="cd19542">
    <property type="entry name" value="CT_NRPS-like"/>
    <property type="match status" value="1"/>
</dbReference>
<dbReference type="CDD" id="cd19545">
    <property type="entry name" value="FUM14_C_NRPS-like"/>
    <property type="match status" value="1"/>
</dbReference>
<dbReference type="FunFam" id="3.40.50.980:FF:000001">
    <property type="entry name" value="Non-ribosomal peptide synthetase"/>
    <property type="match status" value="1"/>
</dbReference>
<dbReference type="FunFam" id="2.30.38.10:FF:000009">
    <property type="entry name" value="Nonribosomal peptide synthase inpB"/>
    <property type="match status" value="1"/>
</dbReference>
<dbReference type="FunFam" id="3.30.300.30:FF:000116">
    <property type="entry name" value="Nonribosomal peptide synthase inpB"/>
    <property type="match status" value="1"/>
</dbReference>
<dbReference type="FunFam" id="3.30.559.10:FF:000048">
    <property type="entry name" value="Nonribosomal peptide synthase inpB"/>
    <property type="match status" value="1"/>
</dbReference>
<dbReference type="FunFam" id="3.30.300.30:FF:000015">
    <property type="entry name" value="Nonribosomal peptide synthase SidD"/>
    <property type="match status" value="1"/>
</dbReference>
<dbReference type="FunFam" id="3.30.559.30:FF:000003">
    <property type="entry name" value="Nonribosomal peptide synthase SidD"/>
    <property type="match status" value="1"/>
</dbReference>
<dbReference type="FunFam" id="1.10.1200.10:FF:000005">
    <property type="entry name" value="Nonribosomal peptide synthetase 1"/>
    <property type="match status" value="2"/>
</dbReference>
<dbReference type="FunFam" id="3.40.50.12780:FF:000014">
    <property type="entry name" value="Nonribosomal peptide synthetase 1"/>
    <property type="match status" value="2"/>
</dbReference>
<dbReference type="Gene3D" id="3.30.300.30">
    <property type="match status" value="2"/>
</dbReference>
<dbReference type="Gene3D" id="3.40.50.980">
    <property type="match status" value="2"/>
</dbReference>
<dbReference type="Gene3D" id="1.10.1200.10">
    <property type="entry name" value="ACP-like"/>
    <property type="match status" value="3"/>
</dbReference>
<dbReference type="Gene3D" id="3.30.559.10">
    <property type="entry name" value="Chloramphenicol acetyltransferase-like domain"/>
    <property type="match status" value="2"/>
</dbReference>
<dbReference type="Gene3D" id="2.30.38.10">
    <property type="entry name" value="Luciferase, Domain 3"/>
    <property type="match status" value="1"/>
</dbReference>
<dbReference type="Gene3D" id="3.40.50.12780">
    <property type="entry name" value="N-terminal domain of ligase-like"/>
    <property type="match status" value="1"/>
</dbReference>
<dbReference type="Gene3D" id="3.30.559.30">
    <property type="entry name" value="Nonribosomal peptide synthetase, condensation domain"/>
    <property type="match status" value="2"/>
</dbReference>
<dbReference type="InterPro" id="IPR010071">
    <property type="entry name" value="AA_adenyl_dom"/>
</dbReference>
<dbReference type="InterPro" id="IPR036736">
    <property type="entry name" value="ACP-like_sf"/>
</dbReference>
<dbReference type="InterPro" id="IPR045851">
    <property type="entry name" value="AMP-bd_C_sf"/>
</dbReference>
<dbReference type="InterPro" id="IPR020845">
    <property type="entry name" value="AMP-binding_CS"/>
</dbReference>
<dbReference type="InterPro" id="IPR000873">
    <property type="entry name" value="AMP-dep_synth/lig_dom"/>
</dbReference>
<dbReference type="InterPro" id="IPR042099">
    <property type="entry name" value="ANL_N_sf"/>
</dbReference>
<dbReference type="InterPro" id="IPR023213">
    <property type="entry name" value="CAT-like_dom_sf"/>
</dbReference>
<dbReference type="InterPro" id="IPR001242">
    <property type="entry name" value="Condensatn"/>
</dbReference>
<dbReference type="InterPro" id="IPR020806">
    <property type="entry name" value="PKS_PP-bd"/>
</dbReference>
<dbReference type="InterPro" id="IPR009081">
    <property type="entry name" value="PP-bd_ACP"/>
</dbReference>
<dbReference type="InterPro" id="IPR006162">
    <property type="entry name" value="Ppantetheine_attach_site"/>
</dbReference>
<dbReference type="NCBIfam" id="TIGR01733">
    <property type="entry name" value="AA-adenyl-dom"/>
    <property type="match status" value="2"/>
</dbReference>
<dbReference type="PANTHER" id="PTHR45527:SF1">
    <property type="entry name" value="FATTY ACID SYNTHASE"/>
    <property type="match status" value="1"/>
</dbReference>
<dbReference type="PANTHER" id="PTHR45527">
    <property type="entry name" value="NONRIBOSOMAL PEPTIDE SYNTHETASE"/>
    <property type="match status" value="1"/>
</dbReference>
<dbReference type="Pfam" id="PF00501">
    <property type="entry name" value="AMP-binding"/>
    <property type="match status" value="2"/>
</dbReference>
<dbReference type="Pfam" id="PF00668">
    <property type="entry name" value="Condensation"/>
    <property type="match status" value="2"/>
</dbReference>
<dbReference type="Pfam" id="PF00550">
    <property type="entry name" value="PP-binding"/>
    <property type="match status" value="3"/>
</dbReference>
<dbReference type="SMART" id="SM00823">
    <property type="entry name" value="PKS_PP"/>
    <property type="match status" value="3"/>
</dbReference>
<dbReference type="SUPFAM" id="SSF56801">
    <property type="entry name" value="Acetyl-CoA synthetase-like"/>
    <property type="match status" value="2"/>
</dbReference>
<dbReference type="SUPFAM" id="SSF47336">
    <property type="entry name" value="ACP-like"/>
    <property type="match status" value="3"/>
</dbReference>
<dbReference type="SUPFAM" id="SSF52777">
    <property type="entry name" value="CoA-dependent acyltransferases"/>
    <property type="match status" value="4"/>
</dbReference>
<dbReference type="PROSITE" id="PS00455">
    <property type="entry name" value="AMP_BINDING"/>
    <property type="match status" value="2"/>
</dbReference>
<dbReference type="PROSITE" id="PS50075">
    <property type="entry name" value="CARRIER"/>
    <property type="match status" value="3"/>
</dbReference>
<dbReference type="PROSITE" id="PS00012">
    <property type="entry name" value="PHOSPHOPANTETHEINE"/>
    <property type="match status" value="1"/>
</dbReference>
<sequence>MPGAIESSPSEWLQLELRRICANVLQLDTKDVDPQRSFLSLGGDSLLAIKILAQCRAQGITINIADIMAATTLESLYSMAQGPAELASSSTSDNASDKDSSLDDSETGALTPTTDAGSSLADTLSPEMKAKLSALSVSQDTAIQAVVPCSAIQDRMLVSQLQNPHLYSCCFVLRLTHSHPGLPVDAKRLGTAWGEVVKRHSSLRTVLVESTQRPGHYNQVILAGIIPAVEHYEGADHLGSVKFNVNNPIVFQPHSIPHRLQLVQVSPSEVYLKFDISHLLIDGQSAEVLLKDLSDAYRDGGLAAAPLSYADYVSSYLLEPAQLNTSRKESGMEMSPLTVPMDRPNEGLFDFQTVSANVPLDSRLVQSVCARYSVTLATVCQLAWGLVLRCYAGTDSVCFSYVNSGRSMSIPGVQEVIGPIVQTSMCSIQLGPADELPKILQRIHRDALQAMSQLSPLEANSTSKSARQLSNTTMSFQRALDDAAAQRAGLLVKIEGKANPTDYDISLGIAAGADGLSVDLDFWGSRLDEESARTMLGAFEAAIRGIIDSPDSTVSNISLLSPGEVSQLAQWNASIPKPERVCVHDKIMEISKLQPGAAAVNSWDGNLTYHDLTVQASTLAHHLRDQLGVGPERFVGICMDKSKWAIVSMLAVLMAGGIVVPLGVSHPRARIRELLNDTAAVALLVDGKHGDRLAGLEVENAAMLTVDQQLLDSLPTIPKPPVSGVTPDNAAWVIYTSGSTGVPKGVVLLHQNISTSVIAHGAVFGVNCVTRTAQFASYTFDVSLSDIVMTLFHGGCVCIFSEESRMNSLTEALQGLAVNYVNLTPTVLGLLNPADLPVIRTVVAGGEAMDPGIIEKWSPHARVFNSVGPSECTIIAVAAGPVTDPAQAANVGYPTGTRLWVALPTDPNQLCPVGVPGELLIEGPMLSRGYLNDPEKTAGAFITNPAFVKHLEAATPAWKVLFQKSERRFYRSGDLVRQKRDGSLVHMGRRDTQVKIRGQRVEIGEIEYWIMQRLKEVRRVAVLVIERGQGKEQKSLVAAVEFKEDYEDVRHSDDDISPVTKIGESTVLPQLLPLTEPLSKALHQLRNDLLEHLPPYMSPTMYAPVSQLPLNLSGKIDRRAVTQFINELDDVQLQQYLAVSGSHQEPSTETEFKLQKLWAKTLGVDVSQISADSHFFHIGGDSVAAMRVVAAARDVELVLRVADLFEYPRLPDLARAVESRVVDEADEEDPAPFSVWRESRGSEPSEEPVELDKIAAMCNLSKEQIEDVLPCTALQEGLIALTAQQPTAYIDRRVFALSQEVDLSQYRAAWQIVIHRTSALRTRIVSGPQTGSLQVVVVPRHIDWNKSSSLDEYLETDRQTGMMMGQPLNRFAFVDQPDGQRFFVWTTHHSTYDGWSRALVLQQVADAYASRDLPPIASFSRFIQYIHSQPQDAAASYWKAQLGGDTSADFPALPIANYRPRPQQRHQHTVNLASSSTKVMLPDLLRGAWALVVHQYVGKTDPVFAIALSGRNAPVRNVPNIAGPTLTTVPVRIFIDPEQLVNEFLQSVRQQAVDMIPYEHTGLQRIKKMVPELAAAVDLKHLFVVQPASDGESKFKIPGVTEHLVAVDEFDSYGLNVECMLSGQSIEVDVRFDEKMLSSSQVIRLMSQFEAVVHQLHLHGEGSLKIKDIDLLSPEDVNQLRQWNALPLAQPLDVCLHDLIAEVARSRPGAAAIEAWDGTLTHAQLQSYASTLAGYLIELGVGPEISVPVCMDKSVWAVVCFLAVLQAGGVVVPLGTGHPIPHIASIIEDTGAKLVLVDAQQFERLLELTPSRGLTLVPIDTQLLNSLPTAAPQTSVTPANAAWIVFTSGSTGKAKGVVLTHSNLSTAIKTHGARFGLGTHTRTIQFAAHTFDAVLQDYFTTLASGGTVCVPSEADRMNDLAGVMRGMNVNFANLTSTVARLLTPDQVPSLKVLILAGEQIQDSVVETWYKHAEVLNVYGPTECSINSTCNGPISDLSNAQSIGFGMGSRTWIADPTDPNRLCPVGTPGELLIEGPGLARGYLGDPAKTEAAIIQNPSFASRFALSDCRVYRTGDLAKQTEDGQILYLGRIDTQIKIRGQRVELGEIEHWIGRHLPHVKHTAVVAISRGEKQMRLAAVIERENGHKPDPVIFTQLKKTLSSLLPSYMVPSLYIPVTEIPLTVSGKLDRRAIKQTVESMPTEELEQYFAGESSGTRVPPSTEMEKALQRIWANSLGIEVDAIGADDNFFQLGGDSVVAMHISASSRQDQSVKGLAVGDIFMHPRLADLAVLLEKRPREGEGGWDEEMRDDESPFALLQEVLDLDLKDI</sequence>
<protein>
    <recommendedName>
        <fullName evidence="8">Nonribosomal peptide synthetase inpB</fullName>
    </recommendedName>
    <alternativeName>
        <fullName evidence="9">Fellutamide B biosynthesis cluster protein B</fullName>
    </alternativeName>
    <alternativeName>
        <fullName evidence="8">Inp cluster protein B</fullName>
    </alternativeName>
    <alternativeName>
        <fullName evidence="7">Interacting NRPS system protein inpA</fullName>
    </alternativeName>
</protein>
<reference key="1">
    <citation type="journal article" date="2005" name="Nature">
        <title>Sequencing of Aspergillus nidulans and comparative analysis with A. fumigatus and A. oryzae.</title>
        <authorList>
            <person name="Galagan J.E."/>
            <person name="Calvo S.E."/>
            <person name="Cuomo C."/>
            <person name="Ma L.-J."/>
            <person name="Wortman J.R."/>
            <person name="Batzoglou S."/>
            <person name="Lee S.-I."/>
            <person name="Bastuerkmen M."/>
            <person name="Spevak C.C."/>
            <person name="Clutterbuck J."/>
            <person name="Kapitonov V."/>
            <person name="Jurka J."/>
            <person name="Scazzocchio C."/>
            <person name="Farman M.L."/>
            <person name="Butler J."/>
            <person name="Purcell S."/>
            <person name="Harris S."/>
            <person name="Braus G.H."/>
            <person name="Draht O."/>
            <person name="Busch S."/>
            <person name="D'Enfert C."/>
            <person name="Bouchier C."/>
            <person name="Goldman G.H."/>
            <person name="Bell-Pedersen D."/>
            <person name="Griffiths-Jones S."/>
            <person name="Doonan J.H."/>
            <person name="Yu J."/>
            <person name="Vienken K."/>
            <person name="Pain A."/>
            <person name="Freitag M."/>
            <person name="Selker E.U."/>
            <person name="Archer D.B."/>
            <person name="Penalva M.A."/>
            <person name="Oakley B.R."/>
            <person name="Momany M."/>
            <person name="Tanaka T."/>
            <person name="Kumagai T."/>
            <person name="Asai K."/>
            <person name="Machida M."/>
            <person name="Nierman W.C."/>
            <person name="Denning D.W."/>
            <person name="Caddick M.X."/>
            <person name="Hynes M."/>
            <person name="Paoletti M."/>
            <person name="Fischer R."/>
            <person name="Miller B.L."/>
            <person name="Dyer P.S."/>
            <person name="Sachs M.S."/>
            <person name="Osmani S.A."/>
            <person name="Birren B.W."/>
        </authorList>
    </citation>
    <scope>NUCLEOTIDE SEQUENCE [LARGE SCALE GENOMIC DNA]</scope>
    <source>
        <strain>FGSC A4 / ATCC 38163 / CBS 112.46 / NRRL 194 / M139</strain>
    </source>
</reference>
<reference key="2">
    <citation type="journal article" date="2009" name="Fungal Genet. Biol.">
        <title>The 2008 update of the Aspergillus nidulans genome annotation: a community effort.</title>
        <authorList>
            <person name="Wortman J.R."/>
            <person name="Gilsenan J.M."/>
            <person name="Joardar V."/>
            <person name="Deegan J."/>
            <person name="Clutterbuck J."/>
            <person name="Andersen M.R."/>
            <person name="Archer D."/>
            <person name="Bencina M."/>
            <person name="Braus G."/>
            <person name="Coutinho P."/>
            <person name="von Dohren H."/>
            <person name="Doonan J."/>
            <person name="Driessen A.J."/>
            <person name="Durek P."/>
            <person name="Espeso E."/>
            <person name="Fekete E."/>
            <person name="Flipphi M."/>
            <person name="Estrada C.G."/>
            <person name="Geysens S."/>
            <person name="Goldman G."/>
            <person name="de Groot P.W."/>
            <person name="Hansen K."/>
            <person name="Harris S.D."/>
            <person name="Heinekamp T."/>
            <person name="Helmstaedt K."/>
            <person name="Henrissat B."/>
            <person name="Hofmann G."/>
            <person name="Homan T."/>
            <person name="Horio T."/>
            <person name="Horiuchi H."/>
            <person name="James S."/>
            <person name="Jones M."/>
            <person name="Karaffa L."/>
            <person name="Karanyi Z."/>
            <person name="Kato M."/>
            <person name="Keller N."/>
            <person name="Kelly D.E."/>
            <person name="Kiel J.A."/>
            <person name="Kim J.M."/>
            <person name="van der Klei I.J."/>
            <person name="Klis F.M."/>
            <person name="Kovalchuk A."/>
            <person name="Krasevec N."/>
            <person name="Kubicek C.P."/>
            <person name="Liu B."/>
            <person name="Maccabe A."/>
            <person name="Meyer V."/>
            <person name="Mirabito P."/>
            <person name="Miskei M."/>
            <person name="Mos M."/>
            <person name="Mullins J."/>
            <person name="Nelson D.R."/>
            <person name="Nielsen J."/>
            <person name="Oakley B.R."/>
            <person name="Osmani S.A."/>
            <person name="Pakula T."/>
            <person name="Paszewski A."/>
            <person name="Paulsen I."/>
            <person name="Pilsyk S."/>
            <person name="Pocsi I."/>
            <person name="Punt P.J."/>
            <person name="Ram A.F."/>
            <person name="Ren Q."/>
            <person name="Robellet X."/>
            <person name="Robson G."/>
            <person name="Seiboth B."/>
            <person name="van Solingen P."/>
            <person name="Specht T."/>
            <person name="Sun J."/>
            <person name="Taheri-Talesh N."/>
            <person name="Takeshita N."/>
            <person name="Ussery D."/>
            <person name="vanKuyk P.A."/>
            <person name="Visser H."/>
            <person name="van de Vondervoort P.J."/>
            <person name="de Vries R.P."/>
            <person name="Walton J."/>
            <person name="Xiang X."/>
            <person name="Xiong Y."/>
            <person name="Zeng A.P."/>
            <person name="Brandt B.W."/>
            <person name="Cornell M.J."/>
            <person name="van den Hondel C.A."/>
            <person name="Visser J."/>
            <person name="Oliver S.G."/>
            <person name="Turner G."/>
        </authorList>
    </citation>
    <scope>GENOME REANNOTATION</scope>
    <source>
        <strain>FGSC A4 / ATCC 38163 / CBS 112.46 / NRRL 194 / M139</strain>
    </source>
</reference>
<reference key="3">
    <citation type="journal article" date="2009" name="Fungal Genet. Biol.">
        <title>A survey of nonribosomal peptide synthetase (NRPS) genes in Aspergillus nidulans.</title>
        <authorList>
            <person name="von Doehren H."/>
        </authorList>
    </citation>
    <scope>IDENTIFICATION</scope>
    <scope>FUNCTION</scope>
    <scope>DOMAIN</scope>
</reference>
<reference key="4">
    <citation type="journal article" date="2010" name="Appl. Environ. Microbiol.">
        <title>Activation of a silent fungal polyketide biosynthesis pathway through regulatory cross talk with a cryptic nonribosomal peptide synthetase gene cluster.</title>
        <authorList>
            <person name="Bergmann S."/>
            <person name="Funk A.N."/>
            <person name="Scherlach K."/>
            <person name="Schroeckh V."/>
            <person name="Shelest E."/>
            <person name="Horn U."/>
            <person name="Hertweck C."/>
            <person name="Brakhage A.A."/>
        </authorList>
    </citation>
    <scope>INDUCTION</scope>
    <scope>DISRUPTION PHENOTYPE</scope>
</reference>
<reference key="5">
    <citation type="journal article" date="2016" name="ACS Chem. Biol.">
        <title>Resistance gene-guided genome mining: serial promoter exchanges in Aspergillus nidulans reveal the biosynthetic pathway for fellutamide B, a proteasome inhibitor.</title>
        <authorList>
            <person name="Yeh H.H."/>
            <person name="Ahuja M."/>
            <person name="Chiang Y.M."/>
            <person name="Oakley C.E."/>
            <person name="Moore S."/>
            <person name="Yoon O."/>
            <person name="Hajovsky H."/>
            <person name="Bok J.W."/>
            <person name="Keller N.P."/>
            <person name="Wang C.C."/>
            <person name="Oakley B.R."/>
        </authorList>
    </citation>
    <scope>FUNCTION</scope>
    <scope>DISRUPTION PHENOTYPE</scope>
    <scope>PATHWAY</scope>
</reference>
<evidence type="ECO:0000250" key="1">
    <source>
        <dbReference type="UniProtKB" id="A0A144KPJ6"/>
    </source>
</evidence>
<evidence type="ECO:0000255" key="2"/>
<evidence type="ECO:0000255" key="3">
    <source>
        <dbReference type="PROSITE-ProRule" id="PRU00258"/>
    </source>
</evidence>
<evidence type="ECO:0000256" key="4">
    <source>
        <dbReference type="SAM" id="MobiDB-lite"/>
    </source>
</evidence>
<evidence type="ECO:0000269" key="5">
    <source>
    </source>
</evidence>
<evidence type="ECO:0000269" key="6">
    <source>
    </source>
</evidence>
<evidence type="ECO:0000303" key="7">
    <source>
    </source>
</evidence>
<evidence type="ECO:0000303" key="8">
    <source>
    </source>
</evidence>
<evidence type="ECO:0000303" key="9">
    <source>
    </source>
</evidence>
<evidence type="ECO:0000305" key="10"/>
<evidence type="ECO:0000305" key="11">
    <source>
    </source>
</evidence>
<evidence type="ECO:0000305" key="12">
    <source>
    </source>
</evidence>
<proteinExistence type="evidence at transcript level"/>